<organism>
    <name type="scientific">Ectopseudomonas mendocina (strain ymp)</name>
    <name type="common">Pseudomonas mendocina</name>
    <dbReference type="NCBI Taxonomy" id="399739"/>
    <lineage>
        <taxon>Bacteria</taxon>
        <taxon>Pseudomonadati</taxon>
        <taxon>Pseudomonadota</taxon>
        <taxon>Gammaproteobacteria</taxon>
        <taxon>Pseudomonadales</taxon>
        <taxon>Pseudomonadaceae</taxon>
        <taxon>Ectopseudomonas</taxon>
    </lineage>
</organism>
<accession>A4XWQ0</accession>
<keyword id="KW-1003">Cell membrane</keyword>
<keyword id="KW-0285">Flavoprotein</keyword>
<keyword id="KW-0288">FMN</keyword>
<keyword id="KW-0472">Membrane</keyword>
<keyword id="KW-0560">Oxidoreductase</keyword>
<keyword id="KW-0665">Pyrimidine biosynthesis</keyword>
<name>PYRD_ECTM1</name>
<feature type="chain" id="PRO_1000024203" description="Dihydroorotate dehydrogenase (quinone)">
    <location>
        <begin position="1"/>
        <end position="340"/>
    </location>
</feature>
<feature type="active site" description="Nucleophile" evidence="1">
    <location>
        <position position="174"/>
    </location>
</feature>
<feature type="binding site" evidence="1">
    <location>
        <begin position="61"/>
        <end position="65"/>
    </location>
    <ligand>
        <name>FMN</name>
        <dbReference type="ChEBI" id="CHEBI:58210"/>
    </ligand>
</feature>
<feature type="binding site" evidence="1">
    <location>
        <position position="65"/>
    </location>
    <ligand>
        <name>substrate</name>
    </ligand>
</feature>
<feature type="binding site" evidence="1">
    <location>
        <position position="85"/>
    </location>
    <ligand>
        <name>FMN</name>
        <dbReference type="ChEBI" id="CHEBI:58210"/>
    </ligand>
</feature>
<feature type="binding site" evidence="1">
    <location>
        <begin position="110"/>
        <end position="114"/>
    </location>
    <ligand>
        <name>substrate</name>
    </ligand>
</feature>
<feature type="binding site" evidence="1">
    <location>
        <position position="138"/>
    </location>
    <ligand>
        <name>FMN</name>
        <dbReference type="ChEBI" id="CHEBI:58210"/>
    </ligand>
</feature>
<feature type="binding site" evidence="1">
    <location>
        <position position="171"/>
    </location>
    <ligand>
        <name>FMN</name>
        <dbReference type="ChEBI" id="CHEBI:58210"/>
    </ligand>
</feature>
<feature type="binding site" evidence="1">
    <location>
        <position position="171"/>
    </location>
    <ligand>
        <name>substrate</name>
    </ligand>
</feature>
<feature type="binding site" evidence="1">
    <location>
        <position position="176"/>
    </location>
    <ligand>
        <name>substrate</name>
    </ligand>
</feature>
<feature type="binding site" evidence="1">
    <location>
        <position position="216"/>
    </location>
    <ligand>
        <name>FMN</name>
        <dbReference type="ChEBI" id="CHEBI:58210"/>
    </ligand>
</feature>
<feature type="binding site" evidence="1">
    <location>
        <position position="244"/>
    </location>
    <ligand>
        <name>FMN</name>
        <dbReference type="ChEBI" id="CHEBI:58210"/>
    </ligand>
</feature>
<feature type="binding site" evidence="1">
    <location>
        <begin position="245"/>
        <end position="246"/>
    </location>
    <ligand>
        <name>substrate</name>
    </ligand>
</feature>
<feature type="binding site" evidence="1">
    <location>
        <position position="267"/>
    </location>
    <ligand>
        <name>FMN</name>
        <dbReference type="ChEBI" id="CHEBI:58210"/>
    </ligand>
</feature>
<feature type="binding site" evidence="1">
    <location>
        <position position="296"/>
    </location>
    <ligand>
        <name>FMN</name>
        <dbReference type="ChEBI" id="CHEBI:58210"/>
    </ligand>
</feature>
<feature type="binding site" evidence="1">
    <location>
        <begin position="317"/>
        <end position="318"/>
    </location>
    <ligand>
        <name>FMN</name>
        <dbReference type="ChEBI" id="CHEBI:58210"/>
    </ligand>
</feature>
<proteinExistence type="inferred from homology"/>
<reference key="1">
    <citation type="submission" date="2007-04" db="EMBL/GenBank/DDBJ databases">
        <title>Complete sequence of Pseudomonas mendocina ymp.</title>
        <authorList>
            <consortium name="US DOE Joint Genome Institute"/>
            <person name="Copeland A."/>
            <person name="Lucas S."/>
            <person name="Lapidus A."/>
            <person name="Barry K."/>
            <person name="Glavina del Rio T."/>
            <person name="Dalin E."/>
            <person name="Tice H."/>
            <person name="Pitluck S."/>
            <person name="Kiss H."/>
            <person name="Brettin T."/>
            <person name="Detter J.C."/>
            <person name="Bruce D."/>
            <person name="Han C."/>
            <person name="Schmutz J."/>
            <person name="Larimer F."/>
            <person name="Land M."/>
            <person name="Hauser L."/>
            <person name="Kyrpides N."/>
            <person name="Mikhailova N."/>
            <person name="Hersman L."/>
            <person name="Dubois J."/>
            <person name="Maurice P."/>
            <person name="Richardson P."/>
        </authorList>
    </citation>
    <scope>NUCLEOTIDE SEQUENCE [LARGE SCALE GENOMIC DNA]</scope>
    <source>
        <strain>ymp</strain>
    </source>
</reference>
<sequence length="340" mass="35915">MYSLARELLFKLSPETSHELSIDLIGAGGRLGLNGLLTKAPASLPTSVMGLQFANPVGLAAGLDKNGDAIDGFAQLGFGFVEIGTVTPRPQPGNPKPRLFRLPQAEAVINRMGFNNLGVDHLLERVKAAKYQGVLGINIGKNFDTPVERAVDDYLTCLDKVYAHASYVTVNVSSPNTPGLRSLQFGDSLKELLEALRRRQEDLTQEHGKRVPLAIKIAPDMSDEETALVASALLGADMDAVIATNTTLSREGVEGLAHADEAGGLSGSPVRDKSTHIVKVLAGELGGRLPIIAVGGITEGRHAAEKIAAGASLVQIYSGFIYKGPALIREAVDAIAALRK</sequence>
<protein>
    <recommendedName>
        <fullName evidence="1">Dihydroorotate dehydrogenase (quinone)</fullName>
        <ecNumber evidence="1">1.3.5.2</ecNumber>
    </recommendedName>
    <alternativeName>
        <fullName evidence="1">DHOdehase</fullName>
        <shortName evidence="1">DHOD</shortName>
        <shortName evidence="1">DHODase</shortName>
    </alternativeName>
    <alternativeName>
        <fullName evidence="1">Dihydroorotate oxidase</fullName>
    </alternativeName>
</protein>
<evidence type="ECO:0000255" key="1">
    <source>
        <dbReference type="HAMAP-Rule" id="MF_00225"/>
    </source>
</evidence>
<dbReference type="EC" id="1.3.5.2" evidence="1"/>
<dbReference type="EMBL" id="CP000680">
    <property type="protein sequence ID" value="ABP85766.1"/>
    <property type="molecule type" value="Genomic_DNA"/>
</dbReference>
<dbReference type="SMR" id="A4XWQ0"/>
<dbReference type="STRING" id="399739.Pmen_3011"/>
<dbReference type="KEGG" id="pmy:Pmen_3011"/>
<dbReference type="PATRIC" id="fig|399739.8.peg.3056"/>
<dbReference type="eggNOG" id="COG0167">
    <property type="taxonomic scope" value="Bacteria"/>
</dbReference>
<dbReference type="HOGENOM" id="CLU_013640_2_0_6"/>
<dbReference type="OrthoDB" id="9802377at2"/>
<dbReference type="UniPathway" id="UPA00070">
    <property type="reaction ID" value="UER00946"/>
</dbReference>
<dbReference type="GO" id="GO:0005737">
    <property type="term" value="C:cytoplasm"/>
    <property type="evidence" value="ECO:0007669"/>
    <property type="project" value="InterPro"/>
</dbReference>
<dbReference type="GO" id="GO:0005886">
    <property type="term" value="C:plasma membrane"/>
    <property type="evidence" value="ECO:0007669"/>
    <property type="project" value="UniProtKB-SubCell"/>
</dbReference>
<dbReference type="GO" id="GO:0106430">
    <property type="term" value="F:dihydroorotate dehydrogenase (quinone) activity"/>
    <property type="evidence" value="ECO:0007669"/>
    <property type="project" value="UniProtKB-EC"/>
</dbReference>
<dbReference type="GO" id="GO:0006207">
    <property type="term" value="P:'de novo' pyrimidine nucleobase biosynthetic process"/>
    <property type="evidence" value="ECO:0007669"/>
    <property type="project" value="InterPro"/>
</dbReference>
<dbReference type="GO" id="GO:0044205">
    <property type="term" value="P:'de novo' UMP biosynthetic process"/>
    <property type="evidence" value="ECO:0007669"/>
    <property type="project" value="UniProtKB-UniRule"/>
</dbReference>
<dbReference type="CDD" id="cd04738">
    <property type="entry name" value="DHOD_2_like"/>
    <property type="match status" value="1"/>
</dbReference>
<dbReference type="FunFam" id="3.20.20.70:FF:000028">
    <property type="entry name" value="Dihydroorotate dehydrogenase (quinone)"/>
    <property type="match status" value="1"/>
</dbReference>
<dbReference type="Gene3D" id="3.20.20.70">
    <property type="entry name" value="Aldolase class I"/>
    <property type="match status" value="1"/>
</dbReference>
<dbReference type="HAMAP" id="MF_00225">
    <property type="entry name" value="DHO_dh_type2"/>
    <property type="match status" value="1"/>
</dbReference>
<dbReference type="InterPro" id="IPR013785">
    <property type="entry name" value="Aldolase_TIM"/>
</dbReference>
<dbReference type="InterPro" id="IPR050074">
    <property type="entry name" value="DHO_dehydrogenase"/>
</dbReference>
<dbReference type="InterPro" id="IPR012135">
    <property type="entry name" value="Dihydroorotate_DH_1_2"/>
</dbReference>
<dbReference type="InterPro" id="IPR005719">
    <property type="entry name" value="Dihydroorotate_DH_2"/>
</dbReference>
<dbReference type="InterPro" id="IPR005720">
    <property type="entry name" value="Dihydroorotate_DH_cat"/>
</dbReference>
<dbReference type="InterPro" id="IPR001295">
    <property type="entry name" value="Dihydroorotate_DH_CS"/>
</dbReference>
<dbReference type="NCBIfam" id="NF003644">
    <property type="entry name" value="PRK05286.1-1"/>
    <property type="match status" value="1"/>
</dbReference>
<dbReference type="NCBIfam" id="NF003645">
    <property type="entry name" value="PRK05286.1-2"/>
    <property type="match status" value="1"/>
</dbReference>
<dbReference type="NCBIfam" id="NF003646">
    <property type="entry name" value="PRK05286.1-4"/>
    <property type="match status" value="1"/>
</dbReference>
<dbReference type="NCBIfam" id="NF003652">
    <property type="entry name" value="PRK05286.2-5"/>
    <property type="match status" value="1"/>
</dbReference>
<dbReference type="NCBIfam" id="TIGR01036">
    <property type="entry name" value="pyrD_sub2"/>
    <property type="match status" value="1"/>
</dbReference>
<dbReference type="PANTHER" id="PTHR48109:SF4">
    <property type="entry name" value="DIHYDROOROTATE DEHYDROGENASE (QUINONE), MITOCHONDRIAL"/>
    <property type="match status" value="1"/>
</dbReference>
<dbReference type="PANTHER" id="PTHR48109">
    <property type="entry name" value="DIHYDROOROTATE DEHYDROGENASE (QUINONE), MITOCHONDRIAL-RELATED"/>
    <property type="match status" value="1"/>
</dbReference>
<dbReference type="Pfam" id="PF01180">
    <property type="entry name" value="DHO_dh"/>
    <property type="match status" value="1"/>
</dbReference>
<dbReference type="PIRSF" id="PIRSF000164">
    <property type="entry name" value="DHO_oxidase"/>
    <property type="match status" value="1"/>
</dbReference>
<dbReference type="SUPFAM" id="SSF51395">
    <property type="entry name" value="FMN-linked oxidoreductases"/>
    <property type="match status" value="1"/>
</dbReference>
<dbReference type="PROSITE" id="PS00911">
    <property type="entry name" value="DHODEHASE_1"/>
    <property type="match status" value="1"/>
</dbReference>
<comment type="function">
    <text evidence="1">Catalyzes the conversion of dihydroorotate to orotate with quinone as electron acceptor.</text>
</comment>
<comment type="catalytic activity">
    <reaction evidence="1">
        <text>(S)-dihydroorotate + a quinone = orotate + a quinol</text>
        <dbReference type="Rhea" id="RHEA:30187"/>
        <dbReference type="ChEBI" id="CHEBI:24646"/>
        <dbReference type="ChEBI" id="CHEBI:30839"/>
        <dbReference type="ChEBI" id="CHEBI:30864"/>
        <dbReference type="ChEBI" id="CHEBI:132124"/>
        <dbReference type="EC" id="1.3.5.2"/>
    </reaction>
</comment>
<comment type="cofactor">
    <cofactor evidence="1">
        <name>FMN</name>
        <dbReference type="ChEBI" id="CHEBI:58210"/>
    </cofactor>
    <text evidence="1">Binds 1 FMN per subunit.</text>
</comment>
<comment type="pathway">
    <text evidence="1">Pyrimidine metabolism; UMP biosynthesis via de novo pathway; orotate from (S)-dihydroorotate (quinone route): step 1/1.</text>
</comment>
<comment type="subunit">
    <text evidence="1">Monomer.</text>
</comment>
<comment type="subcellular location">
    <subcellularLocation>
        <location evidence="1">Cell membrane</location>
        <topology evidence="1">Peripheral membrane protein</topology>
    </subcellularLocation>
</comment>
<comment type="similarity">
    <text evidence="1">Belongs to the dihydroorotate dehydrogenase family. Type 2 subfamily.</text>
</comment>
<gene>
    <name evidence="1" type="primary">pyrD</name>
    <name type="ordered locus">Pmen_3011</name>
</gene>